<protein>
    <recommendedName>
        <fullName evidence="1">Transcription termination/antitermination protein NusG</fullName>
    </recommendedName>
</protein>
<accession>P68895</accession>
<accession>P82547</accession>
<sequence length="179" mass="20385">MLDSFDKGWFVLQTYSGYENKVKENLLQRAQTYNMLDNILRVEIPTQTVNVEKNGQTKEIEENRFPGYVLVEMVMTDEAWFVVRNTPNVTGFVGSHGNRSKPTPLLEEEIRAILLSMGQTIDVFDTNIKEGDVVQIIDGAFMGQEGRVVEIENNKVKLMLNMFGSETVAEVELYQIAEL</sequence>
<proteinExistence type="inferred from homology"/>
<feature type="chain" id="PRO_0000113962" description="Transcription termination/antitermination protein NusG">
    <location>
        <begin position="1"/>
        <end position="179"/>
    </location>
</feature>
<feature type="domain" description="KOW" evidence="1">
    <location>
        <begin position="130"/>
        <end position="157"/>
    </location>
</feature>
<name>NUSG_STRP8</name>
<comment type="function">
    <text evidence="1">Participates in transcription elongation, termination and antitermination.</text>
</comment>
<comment type="similarity">
    <text evidence="1">Belongs to the NusG family.</text>
</comment>
<reference key="1">
    <citation type="journal article" date="2002" name="Proc. Natl. Acad. Sci. U.S.A.">
        <title>Genome sequence and comparative microarray analysis of serotype M18 group A Streptococcus strains associated with acute rheumatic fever outbreaks.</title>
        <authorList>
            <person name="Smoot J.C."/>
            <person name="Barbian K.D."/>
            <person name="Van Gompel J.J."/>
            <person name="Smoot L.M."/>
            <person name="Chaussee M.S."/>
            <person name="Sylva G.L."/>
            <person name="Sturdevant D.E."/>
            <person name="Ricklefs S.M."/>
            <person name="Porcella S.F."/>
            <person name="Parkins L.D."/>
            <person name="Beres S.B."/>
            <person name="Campbell D.S."/>
            <person name="Smith T.M."/>
            <person name="Zhang Q."/>
            <person name="Kapur V."/>
            <person name="Daly J.A."/>
            <person name="Veasy L.G."/>
            <person name="Musser J.M."/>
        </authorList>
    </citation>
    <scope>NUCLEOTIDE SEQUENCE [LARGE SCALE GENOMIC DNA]</scope>
    <source>
        <strain>MGAS8232</strain>
    </source>
</reference>
<keyword id="KW-0804">Transcription</keyword>
<keyword id="KW-0889">Transcription antitermination</keyword>
<keyword id="KW-0805">Transcription regulation</keyword>
<keyword id="KW-0806">Transcription termination</keyword>
<organism>
    <name type="scientific">Streptococcus pyogenes serotype M18 (strain MGAS8232)</name>
    <dbReference type="NCBI Taxonomy" id="186103"/>
    <lineage>
        <taxon>Bacteria</taxon>
        <taxon>Bacillati</taxon>
        <taxon>Bacillota</taxon>
        <taxon>Bacilli</taxon>
        <taxon>Lactobacillales</taxon>
        <taxon>Streptococcaceae</taxon>
        <taxon>Streptococcus</taxon>
    </lineage>
</organism>
<gene>
    <name evidence="1" type="primary">nusG</name>
    <name type="ordered locus">spyM18_0159</name>
</gene>
<evidence type="ECO:0000255" key="1">
    <source>
        <dbReference type="HAMAP-Rule" id="MF_00948"/>
    </source>
</evidence>
<dbReference type="EMBL" id="AE009949">
    <property type="protein sequence ID" value="AAL96965.1"/>
    <property type="molecule type" value="Genomic_DNA"/>
</dbReference>
<dbReference type="RefSeq" id="WP_002987881.1">
    <property type="nucleotide sequence ID" value="NC_003485.1"/>
</dbReference>
<dbReference type="SMR" id="P68895"/>
<dbReference type="GeneID" id="83689799"/>
<dbReference type="KEGG" id="spm:spyM18_0159"/>
<dbReference type="HOGENOM" id="CLU_067287_1_1_9"/>
<dbReference type="GO" id="GO:0005829">
    <property type="term" value="C:cytosol"/>
    <property type="evidence" value="ECO:0007669"/>
    <property type="project" value="TreeGrafter"/>
</dbReference>
<dbReference type="GO" id="GO:0006353">
    <property type="term" value="P:DNA-templated transcription termination"/>
    <property type="evidence" value="ECO:0007669"/>
    <property type="project" value="UniProtKB-UniRule"/>
</dbReference>
<dbReference type="GO" id="GO:0032784">
    <property type="term" value="P:regulation of DNA-templated transcription elongation"/>
    <property type="evidence" value="ECO:0007669"/>
    <property type="project" value="InterPro"/>
</dbReference>
<dbReference type="GO" id="GO:0031564">
    <property type="term" value="P:transcription antitermination"/>
    <property type="evidence" value="ECO:0007669"/>
    <property type="project" value="UniProtKB-UniRule"/>
</dbReference>
<dbReference type="GO" id="GO:0140673">
    <property type="term" value="P:transcription elongation-coupled chromatin remodeling"/>
    <property type="evidence" value="ECO:0007669"/>
    <property type="project" value="InterPro"/>
</dbReference>
<dbReference type="CDD" id="cd06091">
    <property type="entry name" value="KOW_NusG"/>
    <property type="match status" value="1"/>
</dbReference>
<dbReference type="CDD" id="cd09891">
    <property type="entry name" value="NGN_Bact_1"/>
    <property type="match status" value="1"/>
</dbReference>
<dbReference type="FunFam" id="3.30.70.940:FF:000002">
    <property type="entry name" value="Transcription termination/antitermination protein NusG"/>
    <property type="match status" value="1"/>
</dbReference>
<dbReference type="Gene3D" id="2.30.30.30">
    <property type="match status" value="1"/>
</dbReference>
<dbReference type="Gene3D" id="3.30.70.940">
    <property type="entry name" value="NusG, N-terminal domain"/>
    <property type="match status" value="1"/>
</dbReference>
<dbReference type="HAMAP" id="MF_00948">
    <property type="entry name" value="NusG"/>
    <property type="match status" value="1"/>
</dbReference>
<dbReference type="InterPro" id="IPR005824">
    <property type="entry name" value="KOW"/>
</dbReference>
<dbReference type="InterPro" id="IPR047050">
    <property type="entry name" value="NGN"/>
</dbReference>
<dbReference type="InterPro" id="IPR006645">
    <property type="entry name" value="NGN-like_dom"/>
</dbReference>
<dbReference type="InterPro" id="IPR036735">
    <property type="entry name" value="NGN_dom_sf"/>
</dbReference>
<dbReference type="InterPro" id="IPR043425">
    <property type="entry name" value="NusG-like"/>
</dbReference>
<dbReference type="InterPro" id="IPR014722">
    <property type="entry name" value="Rib_uL2_dom2"/>
</dbReference>
<dbReference type="InterPro" id="IPR001062">
    <property type="entry name" value="Transcrpt_antiterm_NusG"/>
</dbReference>
<dbReference type="InterPro" id="IPR008991">
    <property type="entry name" value="Translation_prot_SH3-like_sf"/>
</dbReference>
<dbReference type="NCBIfam" id="TIGR00922">
    <property type="entry name" value="nusG"/>
    <property type="match status" value="1"/>
</dbReference>
<dbReference type="PANTHER" id="PTHR30265">
    <property type="entry name" value="RHO-INTERACTING TRANSCRIPTION TERMINATION FACTOR NUSG"/>
    <property type="match status" value="1"/>
</dbReference>
<dbReference type="PANTHER" id="PTHR30265:SF2">
    <property type="entry name" value="TRANSCRIPTION TERMINATION_ANTITERMINATION PROTEIN NUSG"/>
    <property type="match status" value="1"/>
</dbReference>
<dbReference type="Pfam" id="PF00467">
    <property type="entry name" value="KOW"/>
    <property type="match status" value="1"/>
</dbReference>
<dbReference type="Pfam" id="PF02357">
    <property type="entry name" value="NusG"/>
    <property type="match status" value="1"/>
</dbReference>
<dbReference type="PRINTS" id="PR00338">
    <property type="entry name" value="NUSGTNSCPFCT"/>
</dbReference>
<dbReference type="SMART" id="SM00739">
    <property type="entry name" value="KOW"/>
    <property type="match status" value="1"/>
</dbReference>
<dbReference type="SMART" id="SM00738">
    <property type="entry name" value="NGN"/>
    <property type="match status" value="1"/>
</dbReference>
<dbReference type="SUPFAM" id="SSF82679">
    <property type="entry name" value="N-utilization substance G protein NusG, N-terminal domain"/>
    <property type="match status" value="1"/>
</dbReference>
<dbReference type="SUPFAM" id="SSF50104">
    <property type="entry name" value="Translation proteins SH3-like domain"/>
    <property type="match status" value="1"/>
</dbReference>